<comment type="function">
    <text evidence="1">Removes the pyruvyl group from chorismate, with concomitant aromatization of the ring, to provide 4-hydroxybenzoate (4HB) for the ubiquinone pathway.</text>
</comment>
<comment type="catalytic activity">
    <reaction evidence="1">
        <text>chorismate = 4-hydroxybenzoate + pyruvate</text>
        <dbReference type="Rhea" id="RHEA:16505"/>
        <dbReference type="ChEBI" id="CHEBI:15361"/>
        <dbReference type="ChEBI" id="CHEBI:17879"/>
        <dbReference type="ChEBI" id="CHEBI:29748"/>
        <dbReference type="EC" id="4.1.3.40"/>
    </reaction>
</comment>
<comment type="pathway">
    <text evidence="1">Cofactor biosynthesis; ubiquinone biosynthesis.</text>
</comment>
<comment type="subunit">
    <text evidence="1">Monomer.</text>
</comment>
<comment type="subcellular location">
    <subcellularLocation>
        <location evidence="1">Cytoplasm</location>
    </subcellularLocation>
</comment>
<comment type="similarity">
    <text evidence="1">Belongs to the UbiC family.</text>
</comment>
<reference key="1">
    <citation type="journal article" date="2009" name="Proc. Natl. Acad. Sci. U.S.A.">
        <title>Hamiltonella defensa, genome evolution of protective bacterial endosymbiont from pathogenic ancestors.</title>
        <authorList>
            <person name="Degnan P.H."/>
            <person name="Yu Y."/>
            <person name="Sisneros N."/>
            <person name="Wing R.A."/>
            <person name="Moran N.A."/>
        </authorList>
    </citation>
    <scope>NUCLEOTIDE SEQUENCE [LARGE SCALE GENOMIC DNA]</scope>
    <source>
        <strain>5AT</strain>
    </source>
</reference>
<dbReference type="EC" id="4.1.3.40" evidence="1"/>
<dbReference type="EMBL" id="CP001277">
    <property type="protein sequence ID" value="ACQ68244.1"/>
    <property type="molecule type" value="Genomic_DNA"/>
</dbReference>
<dbReference type="RefSeq" id="WP_015874011.1">
    <property type="nucleotide sequence ID" value="NC_012751.1"/>
</dbReference>
<dbReference type="SMR" id="C4K6Q1"/>
<dbReference type="STRING" id="572265.HDEF_1632"/>
<dbReference type="GeneID" id="66261240"/>
<dbReference type="KEGG" id="hde:HDEF_1632"/>
<dbReference type="eggNOG" id="COG3161">
    <property type="taxonomic scope" value="Bacteria"/>
</dbReference>
<dbReference type="HOGENOM" id="CLU_096824_1_0_6"/>
<dbReference type="UniPathway" id="UPA00232"/>
<dbReference type="Proteomes" id="UP000002334">
    <property type="component" value="Chromosome"/>
</dbReference>
<dbReference type="GO" id="GO:0005829">
    <property type="term" value="C:cytosol"/>
    <property type="evidence" value="ECO:0007669"/>
    <property type="project" value="TreeGrafter"/>
</dbReference>
<dbReference type="GO" id="GO:0008813">
    <property type="term" value="F:chorismate lyase activity"/>
    <property type="evidence" value="ECO:0007669"/>
    <property type="project" value="UniProtKB-UniRule"/>
</dbReference>
<dbReference type="GO" id="GO:0042866">
    <property type="term" value="P:pyruvate biosynthetic process"/>
    <property type="evidence" value="ECO:0007669"/>
    <property type="project" value="UniProtKB-UniRule"/>
</dbReference>
<dbReference type="GO" id="GO:0006744">
    <property type="term" value="P:ubiquinone biosynthetic process"/>
    <property type="evidence" value="ECO:0007669"/>
    <property type="project" value="UniProtKB-UniRule"/>
</dbReference>
<dbReference type="Gene3D" id="3.40.1410.10">
    <property type="entry name" value="Chorismate lyase-like"/>
    <property type="match status" value="1"/>
</dbReference>
<dbReference type="HAMAP" id="MF_01632">
    <property type="entry name" value="UbiC"/>
    <property type="match status" value="1"/>
</dbReference>
<dbReference type="InterPro" id="IPR007440">
    <property type="entry name" value="Chorismate--pyruvate_lyase"/>
</dbReference>
<dbReference type="InterPro" id="IPR028978">
    <property type="entry name" value="Chorismate_lyase_/UTRA_dom_sf"/>
</dbReference>
<dbReference type="NCBIfam" id="NF008656">
    <property type="entry name" value="PRK11655.1"/>
    <property type="match status" value="1"/>
</dbReference>
<dbReference type="PANTHER" id="PTHR38683">
    <property type="entry name" value="CHORISMATE PYRUVATE-LYASE"/>
    <property type="match status" value="1"/>
</dbReference>
<dbReference type="PANTHER" id="PTHR38683:SF1">
    <property type="entry name" value="CHORISMATE PYRUVATE-LYASE"/>
    <property type="match status" value="1"/>
</dbReference>
<dbReference type="Pfam" id="PF04345">
    <property type="entry name" value="Chor_lyase"/>
    <property type="match status" value="1"/>
</dbReference>
<dbReference type="SUPFAM" id="SSF64288">
    <property type="entry name" value="Chorismate lyase-like"/>
    <property type="match status" value="1"/>
</dbReference>
<gene>
    <name evidence="1" type="primary">ubiC</name>
    <name type="ordered locus">HDEF_1632</name>
</gene>
<keyword id="KW-0963">Cytoplasm</keyword>
<keyword id="KW-0456">Lyase</keyword>
<keyword id="KW-0670">Pyruvate</keyword>
<keyword id="KW-0831">Ubiquinone biosynthesis</keyword>
<accession>C4K6Q1</accession>
<sequence length="175" mass="20207">MSTKKKSIIKCIDWRSIEEPDLPLEVAGWLMEAGSMTERFERHCHKIIIDLKHEGFIEHQALSDEKELLPESPRYWIREVVMCADDEPWLLGRTVIPQDTLSGPEHALLNLGKTPLGRYLFSSKDLKRDYIQTGRQGDLWARRSLLQLSNKPLLLTEVFLPASPLYCHSRNTKLA</sequence>
<name>UBIC_HAMD5</name>
<organism>
    <name type="scientific">Hamiltonella defensa subsp. Acyrthosiphon pisum (strain 5AT)</name>
    <dbReference type="NCBI Taxonomy" id="572265"/>
    <lineage>
        <taxon>Bacteria</taxon>
        <taxon>Pseudomonadati</taxon>
        <taxon>Pseudomonadota</taxon>
        <taxon>Gammaproteobacteria</taxon>
        <taxon>Enterobacterales</taxon>
        <taxon>Enterobacteriaceae</taxon>
        <taxon>aphid secondary symbionts</taxon>
        <taxon>Candidatus Hamiltonella</taxon>
    </lineage>
</organism>
<feature type="chain" id="PRO_1000215784" description="Chorismate pyruvate-lyase">
    <location>
        <begin position="1"/>
        <end position="175"/>
    </location>
</feature>
<feature type="binding site" evidence="1">
    <location>
        <position position="36"/>
    </location>
    <ligand>
        <name>substrate</name>
    </ligand>
</feature>
<feature type="binding site" evidence="1">
    <location>
        <position position="78"/>
    </location>
    <ligand>
        <name>substrate</name>
    </ligand>
</feature>
<feature type="binding site" evidence="1">
    <location>
        <position position="116"/>
    </location>
    <ligand>
        <name>substrate</name>
    </ligand>
</feature>
<feature type="binding site" evidence="1">
    <location>
        <position position="157"/>
    </location>
    <ligand>
        <name>substrate</name>
    </ligand>
</feature>
<protein>
    <recommendedName>
        <fullName evidence="1">Chorismate pyruvate-lyase</fullName>
        <shortName evidence="1">CL</shortName>
        <shortName evidence="1">CPL</shortName>
        <ecNumber evidence="1">4.1.3.40</ecNumber>
    </recommendedName>
</protein>
<proteinExistence type="inferred from homology"/>
<evidence type="ECO:0000255" key="1">
    <source>
        <dbReference type="HAMAP-Rule" id="MF_01632"/>
    </source>
</evidence>